<gene>
    <name evidence="1" type="primary">hisG</name>
    <name type="ordered locus">TGAM_1607</name>
</gene>
<comment type="function">
    <text evidence="1">Catalyzes the condensation of ATP and 5-phosphoribose 1-diphosphate to form N'-(5'-phosphoribosyl)-ATP (PR-ATP). Has a crucial role in the pathway because the rate of histidine biosynthesis seems to be controlled primarily by regulation of HisG enzymatic activity.</text>
</comment>
<comment type="catalytic activity">
    <reaction evidence="1">
        <text>1-(5-phospho-beta-D-ribosyl)-ATP + diphosphate = 5-phospho-alpha-D-ribose 1-diphosphate + ATP</text>
        <dbReference type="Rhea" id="RHEA:18473"/>
        <dbReference type="ChEBI" id="CHEBI:30616"/>
        <dbReference type="ChEBI" id="CHEBI:33019"/>
        <dbReference type="ChEBI" id="CHEBI:58017"/>
        <dbReference type="ChEBI" id="CHEBI:73183"/>
        <dbReference type="EC" id="2.4.2.17"/>
    </reaction>
</comment>
<comment type="pathway">
    <text evidence="1">Amino-acid biosynthesis; L-histidine biosynthesis; L-histidine from 5-phospho-alpha-D-ribose 1-diphosphate: step 1/9.</text>
</comment>
<comment type="subcellular location">
    <subcellularLocation>
        <location evidence="1">Cytoplasm</location>
    </subcellularLocation>
</comment>
<comment type="similarity">
    <text evidence="1">Belongs to the ATP phosphoribosyltransferase family. Short subfamily.</text>
</comment>
<sequence length="205" mass="22645">MRFVLPKGRLLRGSLEILRRAGYEIDEPGERRLIQRFNGNEVLLARAFDVPVYVEHGVDVGITGSDVVEERGSDVFVPLDLPFGKCRLSLAMPRESVTPPEDMDGYRIATKYERITRNYFSSLGVEVEVIKLSGSVELAPKVGIADAIVDIVETGTTLRANGLVEVDKVMDVSAQLLVNRISQKTKFDEINSLVLAIKEVVKDGA</sequence>
<reference key="1">
    <citation type="journal article" date="2007" name="Genome Biol.">
        <title>Genome analysis and genome-wide proteomics of Thermococcus gammatolerans, the most radioresistant organism known amongst the Archaea.</title>
        <authorList>
            <person name="Zivanovic Y."/>
            <person name="Armengaud J."/>
            <person name="Lagorce A."/>
            <person name="Leplat C."/>
            <person name="Guerin P."/>
            <person name="Dutertre M."/>
            <person name="Anthouard V."/>
            <person name="Forterre P."/>
            <person name="Wincker P."/>
            <person name="Confalonieri F."/>
        </authorList>
    </citation>
    <scope>NUCLEOTIDE SEQUENCE [LARGE SCALE GENOMIC DNA]</scope>
    <source>
        <strain>DSM 15229 / JCM 11827 / EJ3</strain>
    </source>
</reference>
<proteinExistence type="inferred from homology"/>
<keyword id="KW-0028">Amino-acid biosynthesis</keyword>
<keyword id="KW-0067">ATP-binding</keyword>
<keyword id="KW-0963">Cytoplasm</keyword>
<keyword id="KW-0328">Glycosyltransferase</keyword>
<keyword id="KW-0368">Histidine biosynthesis</keyword>
<keyword id="KW-0547">Nucleotide-binding</keyword>
<keyword id="KW-1185">Reference proteome</keyword>
<keyword id="KW-0808">Transferase</keyword>
<accession>C5A797</accession>
<protein>
    <recommendedName>
        <fullName evidence="1">ATP phosphoribosyltransferase</fullName>
        <shortName evidence="1">ATP-PRT</shortName>
        <shortName evidence="1">ATP-PRTase</shortName>
        <ecNumber evidence="1">2.4.2.17</ecNumber>
    </recommendedName>
</protein>
<name>HIS1_THEGJ</name>
<feature type="chain" id="PRO_1000213279" description="ATP phosphoribosyltransferase">
    <location>
        <begin position="1"/>
        <end position="205"/>
    </location>
</feature>
<dbReference type="EC" id="2.4.2.17" evidence="1"/>
<dbReference type="EMBL" id="CP001398">
    <property type="protein sequence ID" value="ACS34109.1"/>
    <property type="molecule type" value="Genomic_DNA"/>
</dbReference>
<dbReference type="RefSeq" id="WP_015859220.1">
    <property type="nucleotide sequence ID" value="NC_012804.1"/>
</dbReference>
<dbReference type="SMR" id="C5A797"/>
<dbReference type="STRING" id="593117.TGAM_1607"/>
<dbReference type="PaxDb" id="593117-TGAM_1607"/>
<dbReference type="GeneID" id="7988501"/>
<dbReference type="KEGG" id="tga:TGAM_1607"/>
<dbReference type="PATRIC" id="fig|593117.10.peg.1611"/>
<dbReference type="eggNOG" id="arCOG02208">
    <property type="taxonomic scope" value="Archaea"/>
</dbReference>
<dbReference type="HOGENOM" id="CLU_038115_2_0_2"/>
<dbReference type="OrthoDB" id="33116at2157"/>
<dbReference type="UniPathway" id="UPA00031">
    <property type="reaction ID" value="UER00006"/>
</dbReference>
<dbReference type="Proteomes" id="UP000001488">
    <property type="component" value="Chromosome"/>
</dbReference>
<dbReference type="GO" id="GO:0005737">
    <property type="term" value="C:cytoplasm"/>
    <property type="evidence" value="ECO:0007669"/>
    <property type="project" value="UniProtKB-SubCell"/>
</dbReference>
<dbReference type="GO" id="GO:0005524">
    <property type="term" value="F:ATP binding"/>
    <property type="evidence" value="ECO:0007669"/>
    <property type="project" value="UniProtKB-KW"/>
</dbReference>
<dbReference type="GO" id="GO:0003879">
    <property type="term" value="F:ATP phosphoribosyltransferase activity"/>
    <property type="evidence" value="ECO:0007669"/>
    <property type="project" value="UniProtKB-UniRule"/>
</dbReference>
<dbReference type="GO" id="GO:0000105">
    <property type="term" value="P:L-histidine biosynthetic process"/>
    <property type="evidence" value="ECO:0007669"/>
    <property type="project" value="UniProtKB-UniRule"/>
</dbReference>
<dbReference type="CDD" id="cd13595">
    <property type="entry name" value="PBP2_HisGs"/>
    <property type="match status" value="1"/>
</dbReference>
<dbReference type="FunFam" id="3.40.190.10:FF:000008">
    <property type="entry name" value="ATP phosphoribosyltransferase"/>
    <property type="match status" value="1"/>
</dbReference>
<dbReference type="Gene3D" id="3.40.190.10">
    <property type="entry name" value="Periplasmic binding protein-like II"/>
    <property type="match status" value="2"/>
</dbReference>
<dbReference type="HAMAP" id="MF_01018">
    <property type="entry name" value="HisG_Short"/>
    <property type="match status" value="1"/>
</dbReference>
<dbReference type="InterPro" id="IPR013820">
    <property type="entry name" value="ATP_PRibTrfase_cat"/>
</dbReference>
<dbReference type="InterPro" id="IPR018198">
    <property type="entry name" value="ATP_PRibTrfase_CS"/>
</dbReference>
<dbReference type="InterPro" id="IPR001348">
    <property type="entry name" value="ATP_PRibTrfase_HisG"/>
</dbReference>
<dbReference type="InterPro" id="IPR024893">
    <property type="entry name" value="ATP_PRibTrfase_HisG_short"/>
</dbReference>
<dbReference type="NCBIfam" id="TIGR00070">
    <property type="entry name" value="hisG"/>
    <property type="match status" value="1"/>
</dbReference>
<dbReference type="PANTHER" id="PTHR21403:SF10">
    <property type="entry name" value="ATP PHOSPHORIBOSYLTRANSFERASE"/>
    <property type="match status" value="1"/>
</dbReference>
<dbReference type="PANTHER" id="PTHR21403">
    <property type="entry name" value="ATP PHOSPHORIBOSYLTRANSFERASE ATP-PRTASE"/>
    <property type="match status" value="1"/>
</dbReference>
<dbReference type="Pfam" id="PF01634">
    <property type="entry name" value="HisG"/>
    <property type="match status" value="1"/>
</dbReference>
<dbReference type="SUPFAM" id="SSF53850">
    <property type="entry name" value="Periplasmic binding protein-like II"/>
    <property type="match status" value="1"/>
</dbReference>
<dbReference type="PROSITE" id="PS01316">
    <property type="entry name" value="ATP_P_PHORIBOSYLTR"/>
    <property type="match status" value="1"/>
</dbReference>
<organism>
    <name type="scientific">Thermococcus gammatolerans (strain DSM 15229 / JCM 11827 / EJ3)</name>
    <dbReference type="NCBI Taxonomy" id="593117"/>
    <lineage>
        <taxon>Archaea</taxon>
        <taxon>Methanobacteriati</taxon>
        <taxon>Methanobacteriota</taxon>
        <taxon>Thermococci</taxon>
        <taxon>Thermococcales</taxon>
        <taxon>Thermococcaceae</taxon>
        <taxon>Thermococcus</taxon>
    </lineage>
</organism>
<evidence type="ECO:0000255" key="1">
    <source>
        <dbReference type="HAMAP-Rule" id="MF_01018"/>
    </source>
</evidence>